<feature type="chain" id="PRO_0000359300" description="5'-methylthioadenosine/S-adenosylhomocysteine nucleosidase">
    <location>
        <begin position="1"/>
        <end position="232"/>
    </location>
</feature>
<feature type="active site" description="Proton acceptor" evidence="1">
    <location>
        <position position="12"/>
    </location>
</feature>
<feature type="active site" description="Proton donor" evidence="1">
    <location>
        <position position="197"/>
    </location>
</feature>
<feature type="binding site" evidence="1">
    <location>
        <position position="78"/>
    </location>
    <ligand>
        <name>substrate</name>
    </ligand>
</feature>
<feature type="binding site" evidence="1">
    <location>
        <position position="152"/>
    </location>
    <ligand>
        <name>substrate</name>
    </ligand>
</feature>
<feature type="binding site" evidence="1">
    <location>
        <begin position="173"/>
        <end position="174"/>
    </location>
    <ligand>
        <name>substrate</name>
    </ligand>
</feature>
<evidence type="ECO:0000255" key="1">
    <source>
        <dbReference type="HAMAP-Rule" id="MF_01684"/>
    </source>
</evidence>
<proteinExistence type="inferred from homology"/>
<sequence>MKIGIIGAMEEEVTLLRDKIEKRQTISLGGCEIYTGQLNGTEVALLKSGIGKVAAALGATLLLEHCKPDVIINTGSAGGLAPTLKVGDIVVSDEARYHDADVTAFGYEYGQLPGCPAGFKADDKLIAAAEACIAELNLNAVRGLIVSGDAFINGSVGLAKIRHNFPQAIAVEMEATAIAHVCHNFNVPFVVVRAISDVADQQSHLSFDEFLAVAAKQSSLMVESLVQKLAHG</sequence>
<dbReference type="EC" id="3.2.2.9" evidence="1"/>
<dbReference type="EMBL" id="CP000802">
    <property type="protein sequence ID" value="ABV04561.1"/>
    <property type="molecule type" value="Genomic_DNA"/>
</dbReference>
<dbReference type="RefSeq" id="WP_000689833.1">
    <property type="nucleotide sequence ID" value="NC_009800.1"/>
</dbReference>
<dbReference type="SMR" id="A7ZWA7"/>
<dbReference type="KEGG" id="ecx:EcHS_A0163"/>
<dbReference type="HOGENOM" id="CLU_031248_2_2_6"/>
<dbReference type="UniPathway" id="UPA00904">
    <property type="reaction ID" value="UER00871"/>
</dbReference>
<dbReference type="GO" id="GO:0005829">
    <property type="term" value="C:cytosol"/>
    <property type="evidence" value="ECO:0007669"/>
    <property type="project" value="TreeGrafter"/>
</dbReference>
<dbReference type="GO" id="GO:0008782">
    <property type="term" value="F:adenosylhomocysteine nucleosidase activity"/>
    <property type="evidence" value="ECO:0007669"/>
    <property type="project" value="UniProtKB-UniRule"/>
</dbReference>
<dbReference type="GO" id="GO:0008930">
    <property type="term" value="F:methylthioadenosine nucleosidase activity"/>
    <property type="evidence" value="ECO:0007669"/>
    <property type="project" value="UniProtKB-UniRule"/>
</dbReference>
<dbReference type="GO" id="GO:0019509">
    <property type="term" value="P:L-methionine salvage from methylthioadenosine"/>
    <property type="evidence" value="ECO:0007669"/>
    <property type="project" value="UniProtKB-UniRule"/>
</dbReference>
<dbReference type="GO" id="GO:0019284">
    <property type="term" value="P:L-methionine salvage from S-adenosylmethionine"/>
    <property type="evidence" value="ECO:0007669"/>
    <property type="project" value="TreeGrafter"/>
</dbReference>
<dbReference type="GO" id="GO:0046124">
    <property type="term" value="P:purine deoxyribonucleoside catabolic process"/>
    <property type="evidence" value="ECO:0007669"/>
    <property type="project" value="UniProtKB-UniRule"/>
</dbReference>
<dbReference type="CDD" id="cd09008">
    <property type="entry name" value="MTAN"/>
    <property type="match status" value="1"/>
</dbReference>
<dbReference type="FunFam" id="3.40.50.1580:FF:000001">
    <property type="entry name" value="MTA/SAH nucleosidase family protein"/>
    <property type="match status" value="1"/>
</dbReference>
<dbReference type="Gene3D" id="3.40.50.1580">
    <property type="entry name" value="Nucleoside phosphorylase domain"/>
    <property type="match status" value="1"/>
</dbReference>
<dbReference type="HAMAP" id="MF_01684">
    <property type="entry name" value="Salvage_MtnN"/>
    <property type="match status" value="1"/>
</dbReference>
<dbReference type="InterPro" id="IPR010049">
    <property type="entry name" value="MTA_SAH_Nsdase"/>
</dbReference>
<dbReference type="InterPro" id="IPR000845">
    <property type="entry name" value="Nucleoside_phosphorylase_d"/>
</dbReference>
<dbReference type="InterPro" id="IPR035994">
    <property type="entry name" value="Nucleoside_phosphorylase_sf"/>
</dbReference>
<dbReference type="NCBIfam" id="TIGR01704">
    <property type="entry name" value="MTA_SAH-Nsdase"/>
    <property type="match status" value="1"/>
</dbReference>
<dbReference type="NCBIfam" id="NF004079">
    <property type="entry name" value="PRK05584.1"/>
    <property type="match status" value="1"/>
</dbReference>
<dbReference type="PANTHER" id="PTHR46832">
    <property type="entry name" value="5'-METHYLTHIOADENOSINE/S-ADENOSYLHOMOCYSTEINE NUCLEOSIDASE"/>
    <property type="match status" value="1"/>
</dbReference>
<dbReference type="PANTHER" id="PTHR46832:SF1">
    <property type="entry name" value="5'-METHYLTHIOADENOSINE_S-ADENOSYLHOMOCYSTEINE NUCLEOSIDASE"/>
    <property type="match status" value="1"/>
</dbReference>
<dbReference type="Pfam" id="PF01048">
    <property type="entry name" value="PNP_UDP_1"/>
    <property type="match status" value="1"/>
</dbReference>
<dbReference type="SUPFAM" id="SSF53167">
    <property type="entry name" value="Purine and uridine phosphorylases"/>
    <property type="match status" value="1"/>
</dbReference>
<keyword id="KW-0028">Amino-acid biosynthesis</keyword>
<keyword id="KW-0378">Hydrolase</keyword>
<keyword id="KW-0486">Methionine biosynthesis</keyword>
<gene>
    <name evidence="1" type="primary">mtnN</name>
    <name type="ordered locus">EcHS_A0163</name>
</gene>
<accession>A7ZWA7</accession>
<comment type="function">
    <text evidence="1">Catalyzes the irreversible cleavage of the glycosidic bond in both 5'-methylthioadenosine (MTA) and S-adenosylhomocysteine (SAH/AdoHcy) to adenine and the corresponding thioribose, 5'-methylthioribose and S-ribosylhomocysteine, respectively. Also cleaves 5'-deoxyadenosine, a toxic by-product of radical S-adenosylmethionine (SAM) enzymes, into 5-deoxyribose and adenine. Thus, is required for in vivo function of the radical SAM enzymes biotin synthase and lipoic acid synthase, that are inhibited by 5'-deoxyadenosine accumulation.</text>
</comment>
<comment type="catalytic activity">
    <reaction evidence="1">
        <text>S-adenosyl-L-homocysteine + H2O = S-(5-deoxy-D-ribos-5-yl)-L-homocysteine + adenine</text>
        <dbReference type="Rhea" id="RHEA:17805"/>
        <dbReference type="ChEBI" id="CHEBI:15377"/>
        <dbReference type="ChEBI" id="CHEBI:16708"/>
        <dbReference type="ChEBI" id="CHEBI:57856"/>
        <dbReference type="ChEBI" id="CHEBI:58195"/>
        <dbReference type="EC" id="3.2.2.9"/>
    </reaction>
</comment>
<comment type="catalytic activity">
    <reaction evidence="1">
        <text>S-methyl-5'-thioadenosine + H2O = 5-(methylsulfanyl)-D-ribose + adenine</text>
        <dbReference type="Rhea" id="RHEA:13617"/>
        <dbReference type="ChEBI" id="CHEBI:15377"/>
        <dbReference type="ChEBI" id="CHEBI:16708"/>
        <dbReference type="ChEBI" id="CHEBI:17509"/>
        <dbReference type="ChEBI" id="CHEBI:78440"/>
        <dbReference type="EC" id="3.2.2.9"/>
    </reaction>
</comment>
<comment type="catalytic activity">
    <reaction evidence="1">
        <text>5'-deoxyadenosine + H2O = 5-deoxy-D-ribose + adenine</text>
        <dbReference type="Rhea" id="RHEA:29859"/>
        <dbReference type="ChEBI" id="CHEBI:15377"/>
        <dbReference type="ChEBI" id="CHEBI:16708"/>
        <dbReference type="ChEBI" id="CHEBI:17319"/>
        <dbReference type="ChEBI" id="CHEBI:149540"/>
        <dbReference type="EC" id="3.2.2.9"/>
    </reaction>
    <physiologicalReaction direction="left-to-right" evidence="1">
        <dbReference type="Rhea" id="RHEA:29860"/>
    </physiologicalReaction>
</comment>
<comment type="pathway">
    <text evidence="1">Amino-acid biosynthesis; L-methionine biosynthesis via salvage pathway; S-methyl-5-thio-alpha-D-ribose 1-phosphate from S-methyl-5'-thioadenosine (hydrolase route): step 1/2.</text>
</comment>
<comment type="subunit">
    <text evidence="1">Homodimer.</text>
</comment>
<comment type="similarity">
    <text evidence="1">Belongs to the PNP/UDP phosphorylase family. MtnN subfamily.</text>
</comment>
<protein>
    <recommendedName>
        <fullName evidence="1">5'-methylthioadenosine/S-adenosylhomocysteine nucleosidase</fullName>
        <shortName evidence="1">MTA/SAH nucleosidase</shortName>
        <shortName evidence="1">MTAN</shortName>
        <ecNumber evidence="1">3.2.2.9</ecNumber>
    </recommendedName>
    <alternativeName>
        <fullName evidence="1">5'-deoxyadenosine nucleosidase</fullName>
        <shortName evidence="1">DOA nucleosidase</shortName>
        <shortName evidence="1">dAdo nucleosidase</shortName>
    </alternativeName>
    <alternativeName>
        <fullName evidence="1">5'-methylthioadenosine nucleosidase</fullName>
        <shortName evidence="1">MTA nucleosidase</shortName>
    </alternativeName>
    <alternativeName>
        <fullName evidence="1">S-adenosylhomocysteine nucleosidase</fullName>
        <shortName evidence="1">AdoHcy nucleosidase</shortName>
        <shortName evidence="1">SAH nucleosidase</shortName>
        <shortName evidence="1">SRH nucleosidase</shortName>
    </alternativeName>
</protein>
<reference key="1">
    <citation type="journal article" date="2008" name="J. Bacteriol.">
        <title>The pangenome structure of Escherichia coli: comparative genomic analysis of E. coli commensal and pathogenic isolates.</title>
        <authorList>
            <person name="Rasko D.A."/>
            <person name="Rosovitz M.J."/>
            <person name="Myers G.S.A."/>
            <person name="Mongodin E.F."/>
            <person name="Fricke W.F."/>
            <person name="Gajer P."/>
            <person name="Crabtree J."/>
            <person name="Sebaihia M."/>
            <person name="Thomson N.R."/>
            <person name="Chaudhuri R."/>
            <person name="Henderson I.R."/>
            <person name="Sperandio V."/>
            <person name="Ravel J."/>
        </authorList>
    </citation>
    <scope>NUCLEOTIDE SEQUENCE [LARGE SCALE GENOMIC DNA]</scope>
    <source>
        <strain>HS</strain>
    </source>
</reference>
<name>MTNN_ECOHS</name>
<organism>
    <name type="scientific">Escherichia coli O9:H4 (strain HS)</name>
    <dbReference type="NCBI Taxonomy" id="331112"/>
    <lineage>
        <taxon>Bacteria</taxon>
        <taxon>Pseudomonadati</taxon>
        <taxon>Pseudomonadota</taxon>
        <taxon>Gammaproteobacteria</taxon>
        <taxon>Enterobacterales</taxon>
        <taxon>Enterobacteriaceae</taxon>
        <taxon>Escherichia</taxon>
    </lineage>
</organism>